<dbReference type="EMBL" id="AJ555464">
    <property type="protein sequence ID" value="CAD88194.1"/>
    <property type="molecule type" value="mRNA"/>
</dbReference>
<dbReference type="EMBL" id="AJ555465">
    <property type="protein sequence ID" value="CAD88195.1"/>
    <property type="molecule type" value="mRNA"/>
</dbReference>
<dbReference type="EMBL" id="AJ416459">
    <property type="protein sequence ID" value="CAC94916.1"/>
    <property type="molecule type" value="mRNA"/>
</dbReference>
<dbReference type="CCDS" id="CCDS29961.1">
    <molecule id="Q810T2-1"/>
</dbReference>
<dbReference type="SMR" id="Q810T2"/>
<dbReference type="ComplexPortal" id="CPX-2071">
    <property type="entry name" value="Cyclin B3-CDK2 complex"/>
</dbReference>
<dbReference type="FunCoup" id="Q810T2">
    <property type="interactions" value="144"/>
</dbReference>
<dbReference type="STRING" id="10090.ENSMUSP00000111418"/>
<dbReference type="iPTMnet" id="Q810T2"/>
<dbReference type="PhosphoSitePlus" id="Q810T2"/>
<dbReference type="PaxDb" id="10090-ENSMUSP00000111418"/>
<dbReference type="ProteomicsDB" id="280011">
    <molecule id="Q810T2-1"/>
</dbReference>
<dbReference type="UCSC" id="uc012hdx.1">
    <molecule id="Q810T2-2"/>
    <property type="organism name" value="mouse"/>
</dbReference>
<dbReference type="AGR" id="MGI:2183443"/>
<dbReference type="MGI" id="MGI:2183443">
    <property type="gene designation" value="Ccnb3"/>
</dbReference>
<dbReference type="eggNOG" id="KOG0653">
    <property type="taxonomic scope" value="Eukaryota"/>
</dbReference>
<dbReference type="InParanoid" id="Q810T2"/>
<dbReference type="PhylomeDB" id="Q810T2"/>
<dbReference type="ChiTaRS" id="Ccnb3">
    <property type="organism name" value="mouse"/>
</dbReference>
<dbReference type="PRO" id="PR:Q810T2"/>
<dbReference type="Proteomes" id="UP000000589">
    <property type="component" value="Unplaced"/>
</dbReference>
<dbReference type="RNAct" id="Q810T2">
    <property type="molecule type" value="protein"/>
</dbReference>
<dbReference type="GO" id="GO:0005634">
    <property type="term" value="C:nucleus"/>
    <property type="evidence" value="ECO:0007669"/>
    <property type="project" value="UniProtKB-SubCell"/>
</dbReference>
<dbReference type="GO" id="GO:0051301">
    <property type="term" value="P:cell division"/>
    <property type="evidence" value="ECO:0007669"/>
    <property type="project" value="UniProtKB-KW"/>
</dbReference>
<dbReference type="GO" id="GO:0051321">
    <property type="term" value="P:meiotic cell cycle"/>
    <property type="evidence" value="ECO:0007669"/>
    <property type="project" value="UniProtKB-KW"/>
</dbReference>
<dbReference type="FunFam" id="1.10.472.10:FF:000001">
    <property type="entry name" value="G2/mitotic-specific cyclin"/>
    <property type="match status" value="1"/>
</dbReference>
<dbReference type="Gene3D" id="1.10.472.10">
    <property type="entry name" value="Cyclin-like"/>
    <property type="match status" value="2"/>
</dbReference>
<dbReference type="InterPro" id="IPR039361">
    <property type="entry name" value="Cyclin"/>
</dbReference>
<dbReference type="InterPro" id="IPR013763">
    <property type="entry name" value="Cyclin-like_dom"/>
</dbReference>
<dbReference type="InterPro" id="IPR036915">
    <property type="entry name" value="Cyclin-like_sf"/>
</dbReference>
<dbReference type="InterPro" id="IPR004367">
    <property type="entry name" value="Cyclin_C-dom"/>
</dbReference>
<dbReference type="InterPro" id="IPR006671">
    <property type="entry name" value="Cyclin_N"/>
</dbReference>
<dbReference type="PANTHER" id="PTHR10177">
    <property type="entry name" value="CYCLINS"/>
    <property type="match status" value="1"/>
</dbReference>
<dbReference type="Pfam" id="PF02984">
    <property type="entry name" value="Cyclin_C"/>
    <property type="match status" value="1"/>
</dbReference>
<dbReference type="Pfam" id="PF00134">
    <property type="entry name" value="Cyclin_N"/>
    <property type="match status" value="1"/>
</dbReference>
<dbReference type="SMART" id="SM00385">
    <property type="entry name" value="CYCLIN"/>
    <property type="match status" value="2"/>
</dbReference>
<dbReference type="SMART" id="SM01332">
    <property type="entry name" value="Cyclin_C"/>
    <property type="match status" value="1"/>
</dbReference>
<dbReference type="SUPFAM" id="SSF47954">
    <property type="entry name" value="Cyclin-like"/>
    <property type="match status" value="2"/>
</dbReference>
<name>CCNB3_MOUSE</name>
<evidence type="ECO:0000250" key="1"/>
<evidence type="ECO:0000256" key="2">
    <source>
        <dbReference type="SAM" id="MobiDB-lite"/>
    </source>
</evidence>
<evidence type="ECO:0000269" key="3">
    <source>
    </source>
</evidence>
<evidence type="ECO:0000303" key="4">
    <source ref="1"/>
</evidence>
<evidence type="ECO:0000305" key="5"/>
<evidence type="ECO:0007744" key="6">
    <source>
    </source>
</evidence>
<sequence>MPPPLLPKRSKLETEKAQSNKITPREEQQSEKIGKSNHAASSSSSSTQGAVKRRSVFEDVTNASHSQCVQSKEDNIELKSHVSKRTKKGVGEVTQKKIKSSKMGHVTSLSNMEKEFILDIPNKPKTLTTEEPSVFQKTLVLNEEPATKETCLMRKTLKSCAFHQETLLMEKPLTLLVETEDYNEFDTELMTSKKKDKPEDPTIIEEMTDLKKSVIRKVTLTSSPLWLKNKHVVQEEKPVIQEKSSFKRISLVSNVVTTKEKPPVKKPHFRKKKPTTEMKSLLQEPSLEEKYNTQEDASILKKPQVLQENTNNKDATLTEPVTFKGKHSANEATHTKKPSSSKNNPDPQGKGTNLRPLRVHPVTYENEPMSSKKSTTKKKDSHFHGPSVLPDKHSPQMEVSTVKKSLALPNPTTEEKMLHFPVATVLEKQHNMGEAPCLKKPSPLRKQQQLPKRRRFFSNSAVQETVIRKPLFFKMSTTEKDPPSQWPSALPKKHISPGELSKQKKQHVSPKHNMEEDSQCWLDSAFKKQLSREEPASTHTPLKLEMQQAITKETGFHLRNPLVLPTVTSEAKSLTKEPPSFREQNTSLLKRKSTTHTITLQQAQSEWQEMTDEDRNLFSIKPGSHRKEPIPEFLQNPLPPNENCLISQKLSHSMPFASQKTTSQERAHRKESVASNDDKNFFSQDLFSPFSSADEDTLKFHKSLDFQEQVDRKNDSHKKMFDSQDSVSEEESFLRKLFCKDRCSSTEELSQERTVALEQEFLLIKILNENTSSDVDEPLSHQSPHIQNHSDTTKEALEASEALEAPEALETLEALVASEDLEEPLNILEELSTENMVALMKMLVTEDESTKDSFSGNYTAAREAHAEKSLSLEETSINEAATLKESLSSQEKHRAELVTVLKELLVLMKNPSLKRVALAFQENPSNNVETLLREVLALVENSTADESTLQEKPSTKTDVTPKELLALEENSSNKKANPMDSLSFDHKPDTEMGEIARMVLTDEEYNIDTLYERVLALSQGLIAADQLSFTDLQNFEETKIVDEEEFFKSFLVFENKNSPNMSSNAFESRTDNSSAIMPSSKAFNPVENSNPYVSSSKSFKSTLGAKETEITIQDDSDSLERIEKEGQDPLLNTIYAKDVFNYLKEREEKFLVQKYMDGQMELTSDMRAILVDWLVEIQGSFQMTHETLYLAVKIMDLYLMKAQCKKNHLQLLGSTTYMIAAKFEESYPPSLSEFLFICEDMYEKSDMVSLESSILQTLNFDINIPTAYNFLRRYASCIHASMKTLTLSRFICEMTLQEYEYIEERPSKLAAASFILALYMRNLSNCVPTLEYFTGYKMAELHILVRKLNHLLNFRSHSILKNVFEKYSEETYFEVAKIPPLSKQDLENLLNCALFH</sequence>
<organism>
    <name type="scientific">Mus musculus</name>
    <name type="common">Mouse</name>
    <dbReference type="NCBI Taxonomy" id="10090"/>
    <lineage>
        <taxon>Eukaryota</taxon>
        <taxon>Metazoa</taxon>
        <taxon>Chordata</taxon>
        <taxon>Craniata</taxon>
        <taxon>Vertebrata</taxon>
        <taxon>Euteleostomi</taxon>
        <taxon>Mammalia</taxon>
        <taxon>Eutheria</taxon>
        <taxon>Euarchontoglires</taxon>
        <taxon>Glires</taxon>
        <taxon>Rodentia</taxon>
        <taxon>Myomorpha</taxon>
        <taxon>Muroidea</taxon>
        <taxon>Muridae</taxon>
        <taxon>Murinae</taxon>
        <taxon>Mus</taxon>
        <taxon>Mus</taxon>
    </lineage>
</organism>
<proteinExistence type="evidence at protein level"/>
<gene>
    <name type="primary">Ccnb3</name>
    <name type="synonym">Cycb3</name>
</gene>
<accession>Q810T2</accession>
<accession>Q810T3</accession>
<accession>Q8VDC8</accession>
<keyword id="KW-0025">Alternative splicing</keyword>
<keyword id="KW-0131">Cell cycle</keyword>
<keyword id="KW-0132">Cell division</keyword>
<keyword id="KW-0195">Cyclin</keyword>
<keyword id="KW-0469">Meiosis</keyword>
<keyword id="KW-0539">Nucleus</keyword>
<keyword id="KW-0597">Phosphoprotein</keyword>
<keyword id="KW-1185">Reference proteome</keyword>
<keyword id="KW-0832">Ubl conjugation</keyword>
<reference key="1">
    <citation type="submission" date="2003-04" db="EMBL/GenBank/DDBJ databases">
        <title>Cloning of two mRNA coding for two isoforms of mouse cyclin B3.</title>
        <authorList>
            <person name="Lozano J.-C."/>
            <person name="Schatt P."/>
            <person name="Picard A."/>
        </authorList>
    </citation>
    <scope>NUCLEOTIDE SEQUENCE [MRNA] (ISOFORMS 1 AND 2)</scope>
    <source>
        <strain>BALB/cJ</strain>
        <tissue>Testis</tissue>
    </source>
</reference>
<reference key="2">
    <citation type="journal article" date="2002" name="J. Biol. Chem.">
        <title>Characterization and expression of mammalian cyclin b3, a prepachytene meiotic cyclin.</title>
        <authorList>
            <person name="Nguyen T.B."/>
            <person name="Manova K."/>
            <person name="Capodieci P."/>
            <person name="Lindon C."/>
            <person name="Bottega S."/>
            <person name="Wang X.-Y."/>
            <person name="Refik-Rogers J."/>
            <person name="Pines J."/>
            <person name="Wolgemuth D.J."/>
            <person name="Koff A."/>
        </authorList>
    </citation>
    <scope>NUCLEOTIDE SEQUENCE [MRNA] OF 1159-1396</scope>
    <scope>TISSUE SPECIFICITY</scope>
    <scope>DEVELOPMENTAL STAGE</scope>
</reference>
<reference key="3">
    <citation type="journal article" date="2010" name="Cell">
        <title>A tissue-specific atlas of mouse protein phosphorylation and expression.</title>
        <authorList>
            <person name="Huttlin E.L."/>
            <person name="Jedrychowski M.P."/>
            <person name="Elias J.E."/>
            <person name="Goswami T."/>
            <person name="Rad R."/>
            <person name="Beausoleil S.A."/>
            <person name="Villen J."/>
            <person name="Haas W."/>
            <person name="Sowa M.E."/>
            <person name="Gygi S.P."/>
        </authorList>
    </citation>
    <scope>PHOSPHORYLATION [LARGE SCALE ANALYSIS] AT SER-703</scope>
    <scope>IDENTIFICATION BY MASS SPECTROMETRY [LARGE SCALE ANALYSIS]</scope>
    <source>
        <tissue>Testis</tissue>
    </source>
</reference>
<protein>
    <recommendedName>
        <fullName>G2/mitotic-specific cyclin-B3</fullName>
    </recommendedName>
</protein>
<comment type="function">
    <text evidence="1">Cyclins are positive regulatory subunits of the cyclin-dependent kinases (CDKs), and thereby play an essential role in the control of the cell cycle, notably via their destruction during cell division. Its tissue specificity suggest that it may be required during early meiotic prophase I (By similarity).</text>
</comment>
<comment type="subunit">
    <text evidence="1">Interacts with CDK2 kinase.</text>
</comment>
<comment type="subcellular location">
    <subcellularLocation>
        <location evidence="1">Nucleus</location>
    </subcellularLocation>
</comment>
<comment type="alternative products">
    <event type="alternative splicing"/>
    <isoform>
        <id>Q810T2-1</id>
        <name>1</name>
        <sequence type="displayed"/>
    </isoform>
    <isoform>
        <id>Q810T2-2</id>
        <name>2</name>
        <sequence type="described" ref="VSP_010516"/>
    </isoform>
</comment>
<comment type="tissue specificity">
    <text evidence="3">Expressed in testis. Also expressed in the fetal ovary, but not in the adult.</text>
</comment>
<comment type="developmental stage">
    <text evidence="3">In testis, it is expressed during a narrow window of meiosis, beginning at the onset of the first meiotic prophase and ending by the pachytene stage. Expressed during leptoten and zygotene stages of spermatogenesis.</text>
</comment>
<comment type="domain">
    <text evidence="1">The N-terminal destruction box (D-box) probably acts as a recognition signal for degradation via the ubiquitin-proteasome pathway.</text>
</comment>
<comment type="PTM">
    <text evidence="1 5">Ubiquitinated (Probable). Ubiquitination leads to its degradation during anaphase entry, after degradation of CCNB1 (By similarity).</text>
</comment>
<comment type="similarity">
    <text evidence="5">Belongs to the cyclin family. Cyclin AB subfamily.</text>
</comment>
<feature type="chain" id="PRO_0000080374" description="G2/mitotic-specific cyclin-B3">
    <location>
        <begin position="1"/>
        <end position="1396"/>
    </location>
</feature>
<feature type="region of interest" description="Disordered" evidence="2">
    <location>
        <begin position="1"/>
        <end position="64"/>
    </location>
</feature>
<feature type="region of interest" description="Disordered" evidence="2">
    <location>
        <begin position="259"/>
        <end position="398"/>
    </location>
</feature>
<feature type="region of interest" description="Disordered" evidence="2">
    <location>
        <begin position="477"/>
        <end position="500"/>
    </location>
</feature>
<feature type="region of interest" description="Disordered" evidence="2">
    <location>
        <begin position="775"/>
        <end position="796"/>
    </location>
</feature>
<feature type="short sequence motif" description="D-box">
    <location>
        <begin position="54"/>
        <end position="62"/>
    </location>
</feature>
<feature type="compositionally biased region" description="Basic and acidic residues" evidence="2">
    <location>
        <begin position="10"/>
        <end position="34"/>
    </location>
</feature>
<feature type="compositionally biased region" description="Basic residues" evidence="2">
    <location>
        <begin position="264"/>
        <end position="273"/>
    </location>
</feature>
<feature type="compositionally biased region" description="Polar residues" evidence="2">
    <location>
        <begin position="306"/>
        <end position="315"/>
    </location>
</feature>
<feature type="compositionally biased region" description="Polar residues" evidence="2">
    <location>
        <begin position="780"/>
        <end position="790"/>
    </location>
</feature>
<feature type="modified residue" description="Phosphoserine" evidence="6">
    <location>
        <position position="703"/>
    </location>
</feature>
<feature type="splice variant" id="VSP_010516" description="In isoform 2." evidence="4">
    <location>
        <begin position="206"/>
        <end position="1108"/>
    </location>
</feature>
<feature type="sequence conflict" description="In Ref. 1; CAD88195." evidence="5" ref="1">
    <original>S</original>
    <variation>P</variation>
    <location>
        <position position="10"/>
    </location>
</feature>
<feature type="sequence conflict" description="In Ref. 1; CAD88195." evidence="5" ref="1">
    <original>D</original>
    <variation>G</variation>
    <location>
        <position position="1196"/>
    </location>
</feature>
<feature type="sequence conflict" description="In Ref. 1; CAD88195." evidence="5" ref="1">
    <original>C</original>
    <variation>W</variation>
    <location>
        <position position="1392"/>
    </location>
</feature>